<gene>
    <name evidence="1" type="primary">moaA</name>
    <name type="ordered locus">BOV_0948</name>
</gene>
<protein>
    <recommendedName>
        <fullName evidence="1">GTP 3',8-cyclase</fullName>
        <ecNumber evidence="1">4.1.99.22</ecNumber>
    </recommendedName>
    <alternativeName>
        <fullName evidence="1">Molybdenum cofactor biosynthesis protein A</fullName>
    </alternativeName>
</protein>
<accession>A5VQC9</accession>
<dbReference type="EC" id="4.1.99.22" evidence="1"/>
<dbReference type="EMBL" id="CP000708">
    <property type="protein sequence ID" value="ABQ61920.1"/>
    <property type="molecule type" value="Genomic_DNA"/>
</dbReference>
<dbReference type="RefSeq" id="WP_011950192.1">
    <property type="nucleotide sequence ID" value="NC_009505.1"/>
</dbReference>
<dbReference type="SMR" id="A5VQC9"/>
<dbReference type="GeneID" id="45124376"/>
<dbReference type="KEGG" id="bov:BOV_0948"/>
<dbReference type="HOGENOM" id="CLU_009273_0_1_5"/>
<dbReference type="UniPathway" id="UPA00344"/>
<dbReference type="Proteomes" id="UP000006383">
    <property type="component" value="Chromosome I"/>
</dbReference>
<dbReference type="GO" id="GO:0051539">
    <property type="term" value="F:4 iron, 4 sulfur cluster binding"/>
    <property type="evidence" value="ECO:0007669"/>
    <property type="project" value="UniProtKB-UniRule"/>
</dbReference>
<dbReference type="GO" id="GO:0061799">
    <property type="term" value="F:cyclic pyranopterin monophosphate synthase activity"/>
    <property type="evidence" value="ECO:0007669"/>
    <property type="project" value="TreeGrafter"/>
</dbReference>
<dbReference type="GO" id="GO:0061798">
    <property type="term" value="F:GTP 3',8'-cyclase activity"/>
    <property type="evidence" value="ECO:0007669"/>
    <property type="project" value="UniProtKB-UniRule"/>
</dbReference>
<dbReference type="GO" id="GO:0005525">
    <property type="term" value="F:GTP binding"/>
    <property type="evidence" value="ECO:0007669"/>
    <property type="project" value="UniProtKB-UniRule"/>
</dbReference>
<dbReference type="GO" id="GO:0046872">
    <property type="term" value="F:metal ion binding"/>
    <property type="evidence" value="ECO:0007669"/>
    <property type="project" value="UniProtKB-KW"/>
</dbReference>
<dbReference type="GO" id="GO:1904047">
    <property type="term" value="F:S-adenosyl-L-methionine binding"/>
    <property type="evidence" value="ECO:0007669"/>
    <property type="project" value="UniProtKB-UniRule"/>
</dbReference>
<dbReference type="GO" id="GO:0006777">
    <property type="term" value="P:Mo-molybdopterin cofactor biosynthetic process"/>
    <property type="evidence" value="ECO:0007669"/>
    <property type="project" value="UniProtKB-UniRule"/>
</dbReference>
<dbReference type="CDD" id="cd01335">
    <property type="entry name" value="Radical_SAM"/>
    <property type="match status" value="1"/>
</dbReference>
<dbReference type="CDD" id="cd21117">
    <property type="entry name" value="Twitch_MoaA"/>
    <property type="match status" value="1"/>
</dbReference>
<dbReference type="Gene3D" id="3.20.20.70">
    <property type="entry name" value="Aldolase class I"/>
    <property type="match status" value="1"/>
</dbReference>
<dbReference type="HAMAP" id="MF_01225_B">
    <property type="entry name" value="MoaA_B"/>
    <property type="match status" value="1"/>
</dbReference>
<dbReference type="InterPro" id="IPR013785">
    <property type="entry name" value="Aldolase_TIM"/>
</dbReference>
<dbReference type="InterPro" id="IPR006638">
    <property type="entry name" value="Elp3/MiaA/NifB-like_rSAM"/>
</dbReference>
<dbReference type="InterPro" id="IPR013483">
    <property type="entry name" value="MoaA"/>
</dbReference>
<dbReference type="InterPro" id="IPR000385">
    <property type="entry name" value="MoaA_NifB_PqqE_Fe-S-bd_CS"/>
</dbReference>
<dbReference type="InterPro" id="IPR010505">
    <property type="entry name" value="MoaA_twitch"/>
</dbReference>
<dbReference type="InterPro" id="IPR050105">
    <property type="entry name" value="MoCo_biosynth_MoaA/MoaC"/>
</dbReference>
<dbReference type="InterPro" id="IPR007197">
    <property type="entry name" value="rSAM"/>
</dbReference>
<dbReference type="NCBIfam" id="TIGR02666">
    <property type="entry name" value="moaA"/>
    <property type="match status" value="1"/>
</dbReference>
<dbReference type="PANTHER" id="PTHR22960:SF0">
    <property type="entry name" value="MOLYBDENUM COFACTOR BIOSYNTHESIS PROTEIN 1"/>
    <property type="match status" value="1"/>
</dbReference>
<dbReference type="PANTHER" id="PTHR22960">
    <property type="entry name" value="MOLYBDOPTERIN COFACTOR SYNTHESIS PROTEIN A"/>
    <property type="match status" value="1"/>
</dbReference>
<dbReference type="Pfam" id="PF13353">
    <property type="entry name" value="Fer4_12"/>
    <property type="match status" value="1"/>
</dbReference>
<dbReference type="Pfam" id="PF06463">
    <property type="entry name" value="Mob_synth_C"/>
    <property type="match status" value="1"/>
</dbReference>
<dbReference type="Pfam" id="PF04055">
    <property type="entry name" value="Radical_SAM"/>
    <property type="match status" value="1"/>
</dbReference>
<dbReference type="SFLD" id="SFLDG01383">
    <property type="entry name" value="cyclic_pyranopterin_phosphate"/>
    <property type="match status" value="1"/>
</dbReference>
<dbReference type="SFLD" id="SFLDG01072">
    <property type="entry name" value="dehydrogenase_like"/>
    <property type="match status" value="1"/>
</dbReference>
<dbReference type="SMART" id="SM00729">
    <property type="entry name" value="Elp3"/>
    <property type="match status" value="1"/>
</dbReference>
<dbReference type="SUPFAM" id="SSF102114">
    <property type="entry name" value="Radical SAM enzymes"/>
    <property type="match status" value="1"/>
</dbReference>
<dbReference type="PROSITE" id="PS01305">
    <property type="entry name" value="MOAA_NIFB_PQQE"/>
    <property type="match status" value="1"/>
</dbReference>
<dbReference type="PROSITE" id="PS51918">
    <property type="entry name" value="RADICAL_SAM"/>
    <property type="match status" value="1"/>
</dbReference>
<keyword id="KW-0004">4Fe-4S</keyword>
<keyword id="KW-0342">GTP-binding</keyword>
<keyword id="KW-0408">Iron</keyword>
<keyword id="KW-0411">Iron-sulfur</keyword>
<keyword id="KW-0456">Lyase</keyword>
<keyword id="KW-0479">Metal-binding</keyword>
<keyword id="KW-0501">Molybdenum cofactor biosynthesis</keyword>
<keyword id="KW-0547">Nucleotide-binding</keyword>
<keyword id="KW-0949">S-adenosyl-L-methionine</keyword>
<name>MOAA_BRUO2</name>
<proteinExistence type="inferred from homology"/>
<sequence>MRNVQAQPLVSPTEPMIDPFGRAVTYLRVSVTDRCDFRCTYCMAEHMTFLPKKDLLTLEELDRLCSVFIEKGVRKLRLTGGEPLVRKNIMHLIGNLSRHLKSGALDELTLTTNGSQLARFAGELADCGVRRINVSLDTLNPEKFRTITRWGDLSRVLEGIDAAQKAGIHVKINAVALKDFNDAEIPELIRWAHGRSMDVTLIETMPMGEIEFDRTDQYLPLSQVRADLASQFTLADIPYRTGGPARYVTISETGGRLGFITPMTHNFCESCNRVRLTCTGMLYMCLGQNDDADLRKALRESESDEHLSQAIDEAISRKPKGHDFIIDREHNRPSVARHMSLTGG</sequence>
<evidence type="ECO:0000255" key="1">
    <source>
        <dbReference type="HAMAP-Rule" id="MF_01225"/>
    </source>
</evidence>
<evidence type="ECO:0000255" key="2">
    <source>
        <dbReference type="PROSITE-ProRule" id="PRU01266"/>
    </source>
</evidence>
<reference key="1">
    <citation type="journal article" date="2009" name="PLoS ONE">
        <title>Genome degradation in Brucella ovis corresponds with narrowing of its host range and tissue tropism.</title>
        <authorList>
            <person name="Tsolis R.M."/>
            <person name="Seshadri R."/>
            <person name="Santos R.L."/>
            <person name="Sangari F.J."/>
            <person name="Lobo J.M."/>
            <person name="de Jong M.F."/>
            <person name="Ren Q."/>
            <person name="Myers G."/>
            <person name="Brinkac L.M."/>
            <person name="Nelson W.C."/>
            <person name="Deboy R.T."/>
            <person name="Angiuoli S."/>
            <person name="Khouri H."/>
            <person name="Dimitrov G."/>
            <person name="Robinson J.R."/>
            <person name="Mulligan S."/>
            <person name="Walker R.L."/>
            <person name="Elzer P.E."/>
            <person name="Hassan K.A."/>
            <person name="Paulsen I.T."/>
        </authorList>
    </citation>
    <scope>NUCLEOTIDE SEQUENCE [LARGE SCALE GENOMIC DNA]</scope>
    <source>
        <strain>ATCC 25840 / 63/290 / NCTC 10512</strain>
    </source>
</reference>
<organism>
    <name type="scientific">Brucella ovis (strain ATCC 25840 / 63/290 / NCTC 10512)</name>
    <dbReference type="NCBI Taxonomy" id="444178"/>
    <lineage>
        <taxon>Bacteria</taxon>
        <taxon>Pseudomonadati</taxon>
        <taxon>Pseudomonadota</taxon>
        <taxon>Alphaproteobacteria</taxon>
        <taxon>Hyphomicrobiales</taxon>
        <taxon>Brucellaceae</taxon>
        <taxon>Brucella/Ochrobactrum group</taxon>
        <taxon>Brucella</taxon>
    </lineage>
</organism>
<feature type="chain" id="PRO_1000054177" description="GTP 3',8-cyclase">
    <location>
        <begin position="1"/>
        <end position="344"/>
    </location>
</feature>
<feature type="domain" description="Radical SAM core" evidence="2">
    <location>
        <begin position="19"/>
        <end position="245"/>
    </location>
</feature>
<feature type="binding site" evidence="1">
    <location>
        <position position="28"/>
    </location>
    <ligand>
        <name>GTP</name>
        <dbReference type="ChEBI" id="CHEBI:37565"/>
    </ligand>
</feature>
<feature type="binding site" evidence="1">
    <location>
        <position position="35"/>
    </location>
    <ligand>
        <name>[4Fe-4S] cluster</name>
        <dbReference type="ChEBI" id="CHEBI:49883"/>
        <label>1</label>
        <note>4Fe-4S-S-AdoMet</note>
    </ligand>
</feature>
<feature type="binding site" evidence="1">
    <location>
        <position position="39"/>
    </location>
    <ligand>
        <name>[4Fe-4S] cluster</name>
        <dbReference type="ChEBI" id="CHEBI:49883"/>
        <label>1</label>
        <note>4Fe-4S-S-AdoMet</note>
    </ligand>
</feature>
<feature type="binding site" evidence="1">
    <location>
        <position position="41"/>
    </location>
    <ligand>
        <name>S-adenosyl-L-methionine</name>
        <dbReference type="ChEBI" id="CHEBI:59789"/>
    </ligand>
</feature>
<feature type="binding site" evidence="1">
    <location>
        <position position="42"/>
    </location>
    <ligand>
        <name>[4Fe-4S] cluster</name>
        <dbReference type="ChEBI" id="CHEBI:49883"/>
        <label>1</label>
        <note>4Fe-4S-S-AdoMet</note>
    </ligand>
</feature>
<feature type="binding site" evidence="1">
    <location>
        <position position="77"/>
    </location>
    <ligand>
        <name>GTP</name>
        <dbReference type="ChEBI" id="CHEBI:37565"/>
    </ligand>
</feature>
<feature type="binding site" evidence="1">
    <location>
        <position position="81"/>
    </location>
    <ligand>
        <name>S-adenosyl-L-methionine</name>
        <dbReference type="ChEBI" id="CHEBI:59789"/>
    </ligand>
</feature>
<feature type="binding site" evidence="1">
    <location>
        <position position="111"/>
    </location>
    <ligand>
        <name>GTP</name>
        <dbReference type="ChEBI" id="CHEBI:37565"/>
    </ligand>
</feature>
<feature type="binding site" evidence="1">
    <location>
        <position position="135"/>
    </location>
    <ligand>
        <name>S-adenosyl-L-methionine</name>
        <dbReference type="ChEBI" id="CHEBI:59789"/>
    </ligand>
</feature>
<feature type="binding site" evidence="1">
    <location>
        <position position="171"/>
    </location>
    <ligand>
        <name>GTP</name>
        <dbReference type="ChEBI" id="CHEBI:37565"/>
    </ligand>
</feature>
<feature type="binding site" evidence="1">
    <location>
        <position position="205"/>
    </location>
    <ligand>
        <name>S-adenosyl-L-methionine</name>
        <dbReference type="ChEBI" id="CHEBI:59789"/>
    </ligand>
</feature>
<feature type="binding site" evidence="1">
    <location>
        <position position="268"/>
    </location>
    <ligand>
        <name>[4Fe-4S] cluster</name>
        <dbReference type="ChEBI" id="CHEBI:49883"/>
        <label>2</label>
        <note>4Fe-4S-substrate</note>
    </ligand>
</feature>
<feature type="binding site" evidence="1">
    <location>
        <position position="271"/>
    </location>
    <ligand>
        <name>[4Fe-4S] cluster</name>
        <dbReference type="ChEBI" id="CHEBI:49883"/>
        <label>2</label>
        <note>4Fe-4S-substrate</note>
    </ligand>
</feature>
<feature type="binding site" evidence="1">
    <location>
        <begin position="273"/>
        <end position="275"/>
    </location>
    <ligand>
        <name>GTP</name>
        <dbReference type="ChEBI" id="CHEBI:37565"/>
    </ligand>
</feature>
<feature type="binding site" evidence="1">
    <location>
        <position position="285"/>
    </location>
    <ligand>
        <name>[4Fe-4S] cluster</name>
        <dbReference type="ChEBI" id="CHEBI:49883"/>
        <label>2</label>
        <note>4Fe-4S-substrate</note>
    </ligand>
</feature>
<comment type="function">
    <text evidence="1">Catalyzes the cyclization of GTP to (8S)-3',8-cyclo-7,8-dihydroguanosine 5'-triphosphate.</text>
</comment>
<comment type="catalytic activity">
    <reaction evidence="1">
        <text>GTP + AH2 + S-adenosyl-L-methionine = (8S)-3',8-cyclo-7,8-dihydroguanosine 5'-triphosphate + 5'-deoxyadenosine + L-methionine + A + H(+)</text>
        <dbReference type="Rhea" id="RHEA:49576"/>
        <dbReference type="ChEBI" id="CHEBI:13193"/>
        <dbReference type="ChEBI" id="CHEBI:15378"/>
        <dbReference type="ChEBI" id="CHEBI:17319"/>
        <dbReference type="ChEBI" id="CHEBI:17499"/>
        <dbReference type="ChEBI" id="CHEBI:37565"/>
        <dbReference type="ChEBI" id="CHEBI:57844"/>
        <dbReference type="ChEBI" id="CHEBI:59789"/>
        <dbReference type="ChEBI" id="CHEBI:131766"/>
        <dbReference type="EC" id="4.1.99.22"/>
    </reaction>
</comment>
<comment type="cofactor">
    <cofactor evidence="1">
        <name>[4Fe-4S] cluster</name>
        <dbReference type="ChEBI" id="CHEBI:49883"/>
    </cofactor>
    <text evidence="1">Binds 2 [4Fe-4S] clusters. Binds 1 [4Fe-4S] cluster coordinated with 3 cysteines and an exchangeable S-adenosyl-L-methionine and 1 [4Fe-4S] cluster coordinated with 3 cysteines and the GTP-derived substrate.</text>
</comment>
<comment type="pathway">
    <text evidence="1">Cofactor biosynthesis; molybdopterin biosynthesis.</text>
</comment>
<comment type="subunit">
    <text evidence="1">Monomer and homodimer.</text>
</comment>
<comment type="similarity">
    <text evidence="1">Belongs to the radical SAM superfamily. MoaA family.</text>
</comment>